<gene>
    <name evidence="1" type="primary">tsf</name>
    <name type="ordered locus">YpAngola_A3434</name>
</gene>
<accession>A9R395</accession>
<sequence>MVAITAALVKELRERTAAGMMECKKALVEANGDIELAIDNMRKSGQAKAAKKAGRIAAEGIILAKVSADGKYGVILELNCETDFVAKDAGFKAFGEEVINAALAEKIADIDVLKAKFEEQRANLVAKIGENINIRRVAVLEGDILGTYLHGARIGVMVAATGADEELVKHIAMHIAASKPEYVKPDDVPAEVVAREHQIQLDIAIESGKPREIAEKMVEGRMRKFTGEVSLTGQNFVMDPSKTVGDLLKENNADVVNFIRFEVGEGIEKVETDFAAEVAAMSKQS</sequence>
<name>EFTS_YERPG</name>
<protein>
    <recommendedName>
        <fullName evidence="1">Elongation factor Ts</fullName>
        <shortName evidence="1">EF-Ts</shortName>
    </recommendedName>
</protein>
<keyword id="KW-0963">Cytoplasm</keyword>
<keyword id="KW-0251">Elongation factor</keyword>
<keyword id="KW-0648">Protein biosynthesis</keyword>
<comment type="function">
    <text evidence="1">Associates with the EF-Tu.GDP complex and induces the exchange of GDP to GTP. It remains bound to the aminoacyl-tRNA.EF-Tu.GTP complex up to the GTP hydrolysis stage on the ribosome.</text>
</comment>
<comment type="subcellular location">
    <subcellularLocation>
        <location evidence="1">Cytoplasm</location>
    </subcellularLocation>
</comment>
<comment type="similarity">
    <text evidence="1">Belongs to the EF-Ts family.</text>
</comment>
<dbReference type="EMBL" id="CP000901">
    <property type="protein sequence ID" value="ABX85969.1"/>
    <property type="molecule type" value="Genomic_DNA"/>
</dbReference>
<dbReference type="RefSeq" id="WP_002212132.1">
    <property type="nucleotide sequence ID" value="NZ_CP009935.1"/>
</dbReference>
<dbReference type="SMR" id="A9R395"/>
<dbReference type="GeneID" id="96662369"/>
<dbReference type="KEGG" id="ypg:YpAngola_A3434"/>
<dbReference type="PATRIC" id="fig|349746.12.peg.129"/>
<dbReference type="GO" id="GO:0005737">
    <property type="term" value="C:cytoplasm"/>
    <property type="evidence" value="ECO:0007669"/>
    <property type="project" value="UniProtKB-SubCell"/>
</dbReference>
<dbReference type="GO" id="GO:0003746">
    <property type="term" value="F:translation elongation factor activity"/>
    <property type="evidence" value="ECO:0007669"/>
    <property type="project" value="UniProtKB-UniRule"/>
</dbReference>
<dbReference type="CDD" id="cd14275">
    <property type="entry name" value="UBA_EF-Ts"/>
    <property type="match status" value="1"/>
</dbReference>
<dbReference type="FunFam" id="1.10.286.20:FF:000001">
    <property type="entry name" value="Elongation factor Ts"/>
    <property type="match status" value="1"/>
</dbReference>
<dbReference type="FunFam" id="1.10.8.10:FF:000001">
    <property type="entry name" value="Elongation factor Ts"/>
    <property type="match status" value="1"/>
</dbReference>
<dbReference type="FunFam" id="3.30.479.20:FF:000001">
    <property type="entry name" value="Elongation factor Ts"/>
    <property type="match status" value="1"/>
</dbReference>
<dbReference type="Gene3D" id="1.10.286.20">
    <property type="match status" value="1"/>
</dbReference>
<dbReference type="Gene3D" id="1.10.8.10">
    <property type="entry name" value="DNA helicase RuvA subunit, C-terminal domain"/>
    <property type="match status" value="1"/>
</dbReference>
<dbReference type="Gene3D" id="3.30.479.20">
    <property type="entry name" value="Elongation factor Ts, dimerisation domain"/>
    <property type="match status" value="2"/>
</dbReference>
<dbReference type="HAMAP" id="MF_00050">
    <property type="entry name" value="EF_Ts"/>
    <property type="match status" value="1"/>
</dbReference>
<dbReference type="InterPro" id="IPR036402">
    <property type="entry name" value="EF-Ts_dimer_sf"/>
</dbReference>
<dbReference type="InterPro" id="IPR001816">
    <property type="entry name" value="Transl_elong_EFTs/EF1B"/>
</dbReference>
<dbReference type="InterPro" id="IPR014039">
    <property type="entry name" value="Transl_elong_EFTs/EF1B_dimer"/>
</dbReference>
<dbReference type="InterPro" id="IPR018101">
    <property type="entry name" value="Transl_elong_Ts_CS"/>
</dbReference>
<dbReference type="InterPro" id="IPR009060">
    <property type="entry name" value="UBA-like_sf"/>
</dbReference>
<dbReference type="NCBIfam" id="TIGR00116">
    <property type="entry name" value="tsf"/>
    <property type="match status" value="1"/>
</dbReference>
<dbReference type="PANTHER" id="PTHR11741">
    <property type="entry name" value="ELONGATION FACTOR TS"/>
    <property type="match status" value="1"/>
</dbReference>
<dbReference type="PANTHER" id="PTHR11741:SF0">
    <property type="entry name" value="ELONGATION FACTOR TS, MITOCHONDRIAL"/>
    <property type="match status" value="1"/>
</dbReference>
<dbReference type="Pfam" id="PF00889">
    <property type="entry name" value="EF_TS"/>
    <property type="match status" value="1"/>
</dbReference>
<dbReference type="SUPFAM" id="SSF54713">
    <property type="entry name" value="Elongation factor Ts (EF-Ts), dimerisation domain"/>
    <property type="match status" value="2"/>
</dbReference>
<dbReference type="SUPFAM" id="SSF46934">
    <property type="entry name" value="UBA-like"/>
    <property type="match status" value="1"/>
</dbReference>
<dbReference type="PROSITE" id="PS01127">
    <property type="entry name" value="EF_TS_2"/>
    <property type="match status" value="1"/>
</dbReference>
<organism>
    <name type="scientific">Yersinia pestis bv. Antiqua (strain Angola)</name>
    <dbReference type="NCBI Taxonomy" id="349746"/>
    <lineage>
        <taxon>Bacteria</taxon>
        <taxon>Pseudomonadati</taxon>
        <taxon>Pseudomonadota</taxon>
        <taxon>Gammaproteobacteria</taxon>
        <taxon>Enterobacterales</taxon>
        <taxon>Yersiniaceae</taxon>
        <taxon>Yersinia</taxon>
    </lineage>
</organism>
<reference key="1">
    <citation type="journal article" date="2010" name="J. Bacteriol.">
        <title>Genome sequence of the deep-rooted Yersinia pestis strain Angola reveals new insights into the evolution and pangenome of the plague bacterium.</title>
        <authorList>
            <person name="Eppinger M."/>
            <person name="Worsham P.L."/>
            <person name="Nikolich M.P."/>
            <person name="Riley D.R."/>
            <person name="Sebastian Y."/>
            <person name="Mou S."/>
            <person name="Achtman M."/>
            <person name="Lindler L.E."/>
            <person name="Ravel J."/>
        </authorList>
    </citation>
    <scope>NUCLEOTIDE SEQUENCE [LARGE SCALE GENOMIC DNA]</scope>
    <source>
        <strain>Angola</strain>
    </source>
</reference>
<evidence type="ECO:0000255" key="1">
    <source>
        <dbReference type="HAMAP-Rule" id="MF_00050"/>
    </source>
</evidence>
<proteinExistence type="inferred from homology"/>
<feature type="chain" id="PRO_1000189907" description="Elongation factor Ts">
    <location>
        <begin position="1"/>
        <end position="285"/>
    </location>
</feature>
<feature type="region of interest" description="Involved in Mg(2+) ion dislocation from EF-Tu" evidence="1">
    <location>
        <begin position="82"/>
        <end position="85"/>
    </location>
</feature>